<protein>
    <recommendedName>
        <fullName evidence="1">Small ribosomal subunit protein uS14</fullName>
    </recommendedName>
    <alternativeName>
        <fullName evidence="2">30S ribosomal protein S14</fullName>
    </alternativeName>
</protein>
<gene>
    <name evidence="1" type="primary">rpsN</name>
    <name type="ordered locus">Clim_2216</name>
</gene>
<feature type="chain" id="PRO_1000128353" description="Small ribosomal subunit protein uS14">
    <location>
        <begin position="1"/>
        <end position="89"/>
    </location>
</feature>
<reference key="1">
    <citation type="submission" date="2008-05" db="EMBL/GenBank/DDBJ databases">
        <title>Complete sequence of Chlorobium limicola DSM 245.</title>
        <authorList>
            <consortium name="US DOE Joint Genome Institute"/>
            <person name="Lucas S."/>
            <person name="Copeland A."/>
            <person name="Lapidus A."/>
            <person name="Glavina del Rio T."/>
            <person name="Dalin E."/>
            <person name="Tice H."/>
            <person name="Bruce D."/>
            <person name="Goodwin L."/>
            <person name="Pitluck S."/>
            <person name="Schmutz J."/>
            <person name="Larimer F."/>
            <person name="Land M."/>
            <person name="Hauser L."/>
            <person name="Kyrpides N."/>
            <person name="Ovchinnikova G."/>
            <person name="Zhao F."/>
            <person name="Li T."/>
            <person name="Liu Z."/>
            <person name="Overmann J."/>
            <person name="Bryant D.A."/>
            <person name="Richardson P."/>
        </authorList>
    </citation>
    <scope>NUCLEOTIDE SEQUENCE [LARGE SCALE GENOMIC DNA]</scope>
    <source>
        <strain>DSM 245 / NBRC 103803 / 6330</strain>
    </source>
</reference>
<keyword id="KW-0687">Ribonucleoprotein</keyword>
<keyword id="KW-0689">Ribosomal protein</keyword>
<keyword id="KW-0694">RNA-binding</keyword>
<keyword id="KW-0699">rRNA-binding</keyword>
<name>RS14_CHLL2</name>
<accession>B3EGX7</accession>
<evidence type="ECO:0000255" key="1">
    <source>
        <dbReference type="HAMAP-Rule" id="MF_00537"/>
    </source>
</evidence>
<evidence type="ECO:0000305" key="2"/>
<sequence>MAKKSIIARNEKRKKLVEKYAAKREELLKAGDYEALRKLPRDSSATRVKNRCVLTGRGRGVYEKFGLCRQMFRKFALEGKLPGVKKASW</sequence>
<comment type="function">
    <text evidence="1">Binds 16S rRNA, required for the assembly of 30S particles and may also be responsible for determining the conformation of the 16S rRNA at the A site.</text>
</comment>
<comment type="subunit">
    <text evidence="1">Part of the 30S ribosomal subunit. Contacts proteins S3 and S10.</text>
</comment>
<comment type="similarity">
    <text evidence="1">Belongs to the universal ribosomal protein uS14 family.</text>
</comment>
<dbReference type="EMBL" id="CP001097">
    <property type="protein sequence ID" value="ACD91240.1"/>
    <property type="molecule type" value="Genomic_DNA"/>
</dbReference>
<dbReference type="RefSeq" id="WP_012467107.1">
    <property type="nucleotide sequence ID" value="NC_010803.1"/>
</dbReference>
<dbReference type="SMR" id="B3EGX7"/>
<dbReference type="STRING" id="290315.Clim_2216"/>
<dbReference type="KEGG" id="cli:Clim_2216"/>
<dbReference type="eggNOG" id="COG0199">
    <property type="taxonomic scope" value="Bacteria"/>
</dbReference>
<dbReference type="HOGENOM" id="CLU_139869_0_0_10"/>
<dbReference type="OrthoDB" id="9810484at2"/>
<dbReference type="Proteomes" id="UP000008841">
    <property type="component" value="Chromosome"/>
</dbReference>
<dbReference type="GO" id="GO:0005737">
    <property type="term" value="C:cytoplasm"/>
    <property type="evidence" value="ECO:0007669"/>
    <property type="project" value="UniProtKB-ARBA"/>
</dbReference>
<dbReference type="GO" id="GO:0015935">
    <property type="term" value="C:small ribosomal subunit"/>
    <property type="evidence" value="ECO:0007669"/>
    <property type="project" value="TreeGrafter"/>
</dbReference>
<dbReference type="GO" id="GO:0019843">
    <property type="term" value="F:rRNA binding"/>
    <property type="evidence" value="ECO:0007669"/>
    <property type="project" value="UniProtKB-UniRule"/>
</dbReference>
<dbReference type="GO" id="GO:0003735">
    <property type="term" value="F:structural constituent of ribosome"/>
    <property type="evidence" value="ECO:0007669"/>
    <property type="project" value="InterPro"/>
</dbReference>
<dbReference type="GO" id="GO:0006412">
    <property type="term" value="P:translation"/>
    <property type="evidence" value="ECO:0007669"/>
    <property type="project" value="UniProtKB-UniRule"/>
</dbReference>
<dbReference type="Gene3D" id="4.10.830.10">
    <property type="entry name" value="30s Ribosomal Protein S14, Chain N"/>
    <property type="match status" value="1"/>
</dbReference>
<dbReference type="HAMAP" id="MF_00537">
    <property type="entry name" value="Ribosomal_uS14_1"/>
    <property type="match status" value="1"/>
</dbReference>
<dbReference type="InterPro" id="IPR001209">
    <property type="entry name" value="Ribosomal_uS14"/>
</dbReference>
<dbReference type="InterPro" id="IPR023036">
    <property type="entry name" value="Ribosomal_uS14_bac/plastid"/>
</dbReference>
<dbReference type="InterPro" id="IPR018271">
    <property type="entry name" value="Ribosomal_uS14_CS"/>
</dbReference>
<dbReference type="InterPro" id="IPR043140">
    <property type="entry name" value="Ribosomal_uS14_sf"/>
</dbReference>
<dbReference type="NCBIfam" id="NF006477">
    <property type="entry name" value="PRK08881.1"/>
    <property type="match status" value="1"/>
</dbReference>
<dbReference type="PANTHER" id="PTHR19836">
    <property type="entry name" value="30S RIBOSOMAL PROTEIN S14"/>
    <property type="match status" value="1"/>
</dbReference>
<dbReference type="PANTHER" id="PTHR19836:SF19">
    <property type="entry name" value="SMALL RIBOSOMAL SUBUNIT PROTEIN US14M"/>
    <property type="match status" value="1"/>
</dbReference>
<dbReference type="Pfam" id="PF00253">
    <property type="entry name" value="Ribosomal_S14"/>
    <property type="match status" value="1"/>
</dbReference>
<dbReference type="SUPFAM" id="SSF57716">
    <property type="entry name" value="Glucocorticoid receptor-like (DNA-binding domain)"/>
    <property type="match status" value="1"/>
</dbReference>
<dbReference type="PROSITE" id="PS00527">
    <property type="entry name" value="RIBOSOMAL_S14"/>
    <property type="match status" value="1"/>
</dbReference>
<proteinExistence type="inferred from homology"/>
<organism>
    <name type="scientific">Chlorobium limicola (strain DSM 245 / NBRC 103803 / 6330)</name>
    <dbReference type="NCBI Taxonomy" id="290315"/>
    <lineage>
        <taxon>Bacteria</taxon>
        <taxon>Pseudomonadati</taxon>
        <taxon>Chlorobiota</taxon>
        <taxon>Chlorobiia</taxon>
        <taxon>Chlorobiales</taxon>
        <taxon>Chlorobiaceae</taxon>
        <taxon>Chlorobium/Pelodictyon group</taxon>
        <taxon>Chlorobium</taxon>
    </lineage>
</organism>